<feature type="initiator methionine" description="Removed" evidence="2">
    <location>
        <position position="1"/>
    </location>
</feature>
<feature type="chain" id="PRO_0000457467" description="F-actin-capping protein subunit alpha-1" evidence="2">
    <location>
        <begin position="2"/>
        <end position="286"/>
    </location>
</feature>
<feature type="modified residue" description="N-acetylalanine" evidence="2">
    <location>
        <position position="2"/>
    </location>
</feature>
<feature type="modified residue" description="Phosphoserine" evidence="2">
    <location>
        <position position="9"/>
    </location>
</feature>
<feature type="modified residue" description="N6-acetyllysine" evidence="2">
    <location>
        <position position="19"/>
    </location>
</feature>
<feature type="modified residue" description="N6-acetyllysine" evidence="2">
    <location>
        <position position="97"/>
    </location>
</feature>
<feature type="helix" evidence="20">
    <location>
        <begin position="11"/>
        <end position="21"/>
    </location>
</feature>
<feature type="helix" evidence="20">
    <location>
        <begin position="29"/>
        <end position="40"/>
    </location>
</feature>
<feature type="helix" evidence="20">
    <location>
        <begin position="43"/>
        <end position="60"/>
    </location>
</feature>
<feature type="turn" evidence="20">
    <location>
        <begin position="68"/>
        <end position="71"/>
    </location>
</feature>
<feature type="strand" evidence="20">
    <location>
        <begin position="83"/>
        <end position="85"/>
    </location>
</feature>
<feature type="strand" evidence="20">
    <location>
        <begin position="87"/>
        <end position="89"/>
    </location>
</feature>
<feature type="helix" evidence="20">
    <location>
        <begin position="91"/>
        <end position="93"/>
    </location>
</feature>
<feature type="strand" evidence="20">
    <location>
        <begin position="94"/>
        <end position="99"/>
    </location>
</feature>
<feature type="turn" evidence="20">
    <location>
        <begin position="100"/>
        <end position="103"/>
    </location>
</feature>
<feature type="strand" evidence="20">
    <location>
        <begin position="104"/>
        <end position="106"/>
    </location>
</feature>
<feature type="helix" evidence="20">
    <location>
        <begin position="118"/>
        <end position="135"/>
    </location>
</feature>
<feature type="strand" evidence="20">
    <location>
        <begin position="136"/>
        <end position="138"/>
    </location>
</feature>
<feature type="strand" evidence="20">
    <location>
        <begin position="140"/>
        <end position="146"/>
    </location>
</feature>
<feature type="helix" evidence="20">
    <location>
        <begin position="148"/>
        <end position="150"/>
    </location>
</feature>
<feature type="strand" evidence="20">
    <location>
        <begin position="152"/>
        <end position="161"/>
    </location>
</feature>
<feature type="helix" evidence="20">
    <location>
        <begin position="165"/>
        <end position="167"/>
    </location>
</feature>
<feature type="strand" evidence="20">
    <location>
        <begin position="172"/>
        <end position="181"/>
    </location>
</feature>
<feature type="strand" evidence="20">
    <location>
        <begin position="186"/>
        <end position="191"/>
    </location>
</feature>
<feature type="strand" evidence="20">
    <location>
        <begin position="194"/>
        <end position="198"/>
    </location>
</feature>
<feature type="strand" evidence="20">
    <location>
        <begin position="202"/>
        <end position="209"/>
    </location>
</feature>
<feature type="strand" evidence="20">
    <location>
        <begin position="211"/>
        <end position="216"/>
    </location>
</feature>
<feature type="helix" evidence="20">
    <location>
        <begin position="222"/>
        <end position="248"/>
    </location>
</feature>
<feature type="turn" evidence="20">
    <location>
        <begin position="249"/>
        <end position="253"/>
    </location>
</feature>
<feature type="helix" evidence="20">
    <location>
        <begin position="254"/>
        <end position="258"/>
    </location>
</feature>
<feature type="helix" evidence="20">
    <location>
        <begin position="271"/>
        <end position="276"/>
    </location>
</feature>
<name>CAZA1_PIG</name>
<keyword id="KW-0002">3D-structure</keyword>
<keyword id="KW-0007">Acetylation</keyword>
<keyword id="KW-0117">Actin capping</keyword>
<keyword id="KW-0009">Actin-binding</keyword>
<keyword id="KW-0963">Cytoplasm</keyword>
<keyword id="KW-0206">Cytoskeleton</keyword>
<keyword id="KW-0597">Phosphoprotein</keyword>
<keyword id="KW-1185">Reference proteome</keyword>
<reference evidence="10" key="1">
    <citation type="submission" date="2006-09" db="EMBL/GenBank/DDBJ databases">
        <title>Actin binding activities of individual CapZ-subunit isoforms and their interaction with smooth muscle a-actinin.</title>
        <authorList>
            <person name="Glenz M.H."/>
            <person name="Hinssen H."/>
        </authorList>
    </citation>
    <scope>NUCLEOTIDE SEQUENCE [MRNA]</scope>
</reference>
<reference evidence="9" key="2">
    <citation type="journal article" date="2008" name="Biochem. Genet.">
        <title>Sequence characterization, polymorphism, and chromosomal localizations of the porcine CapZ genes.</title>
        <authorList>
            <person name="Yang E."/>
            <person name="Wang H."/>
            <person name="Wu X.X."/>
            <person name="Tang Z.L."/>
            <person name="Yang S.L."/>
            <person name="Li K."/>
        </authorList>
    </citation>
    <scope>NUCLEOTIDE SEQUENCE [MRNA]</scope>
</reference>
<reference evidence="12" key="3">
    <citation type="submission" date="2013-02" db="EMBL/GenBank/DDBJ databases">
        <title>Global Gene Expression Profiling of Alveolar Macrophages by Deep Sequencing.</title>
        <authorList>
            <person name="Dawson H.D."/>
            <person name="Chen C.T."/>
        </authorList>
    </citation>
    <scope>NUCLEOTIDE SEQUENCE [MRNA]</scope>
</reference>
<reference evidence="11" key="4">
    <citation type="journal article" date="2019" name="PeerJ">
        <title>Genes of the pig, Sus scrofa, reconstructed with EvidentialGene.</title>
        <authorList>
            <person name="Gilbert D.G."/>
        </authorList>
    </citation>
    <scope>NUCLEOTIDE SEQUENCE [LARGE SCALE MRNA]</scope>
</reference>
<reference evidence="13 14" key="5">
    <citation type="journal article" date="2015" name="Science">
        <title>The structure of the dynactin complex and its interaction with dynein.</title>
        <authorList>
            <person name="Urnavicius L."/>
            <person name="Zhang K."/>
            <person name="Diamant A.G."/>
            <person name="Motz C."/>
            <person name="Schlager M.A."/>
            <person name="Yu M."/>
            <person name="Patel N.A."/>
            <person name="Robinson C.V."/>
            <person name="Carter A.P."/>
        </authorList>
    </citation>
    <scope>STRUCTURE BY ELECTRON MICROSCOPY (4.00 ANGSTROMS) OF 1-71 AND 1-20</scope>
</reference>
<reference evidence="15 16" key="6">
    <citation type="journal article" date="2018" name="Nature">
        <title>Cryo-EM shows how dynactin recruits two dyneins for faster movement.</title>
        <authorList>
            <person name="Urnavicius L."/>
            <person name="Lau C.K."/>
            <person name="Elshenawy M.M."/>
            <person name="Morales-Rios E."/>
            <person name="Motz C."/>
            <person name="Yildiz A."/>
            <person name="Carter A.P."/>
        </authorList>
    </citation>
    <scope>STRUCTURE BY ELECTRON MICROSCOPY (3.40 ANGSTROMS)</scope>
    <scope>SUBUNIT</scope>
</reference>
<reference evidence="17" key="7">
    <citation type="journal article" date="2021" name="EMBO J.">
        <title>Cryo-EM reveals the complex architecture of dynactin's shoulder region and pointed end.</title>
        <authorList>
            <person name="Lau C.K."/>
            <person name="O'Reilly F.J."/>
            <person name="Santhanam B."/>
            <person name="Lacey S.E."/>
            <person name="Rappsilber J."/>
            <person name="Carter A.P."/>
        </authorList>
    </citation>
    <scope>STRUCTURE BY ELECTRON MICROSCOPY (3.80 ANGSTROMS)</scope>
    <scope>SUBUNIT</scope>
</reference>
<reference evidence="18 19" key="8">
    <citation type="journal article" date="2022" name="Nature">
        <title>Structure of dynein-dynactin on microtubules shows tandem adaptor binding.</title>
        <authorList>
            <person name="Chaaban S."/>
            <person name="Carter A.P."/>
        </authorList>
    </citation>
    <scope>STRUCTURE BY ELECTRON MICROSCOPY (3.37 ANGSTROMS)</scope>
    <scope>SUBUNIT</scope>
</reference>
<comment type="function">
    <text evidence="2 3 4 5 6">F-actin-capping proteins bind in a Ca(2+)-independent manner to the fast growing ends of actin filaments (barbed end) thereby blocking the exchange of subunits at these ends. Unlike other capping proteins (such as gelsolin and severin), these proteins do not sever actin filaments. May play a role in the formation of epithelial cell junctions (By similarity). Forms, with CAPZB, the barbed end of the fast growing ends of actin filaments in the dynactin complex and stabilizes dynactin structure. The dynactin multiprotein complex activates the molecular motor dynein for ultra-processive transport along microtubules (PubMed:25814576, PubMed:29420470, PubMed:33734450, PubMed:36071160).</text>
</comment>
<comment type="subunit">
    <text evidence="1 2 3 4 5 6">Component of the F-actin capping complex, composed of a heterodimer of an alpha and a beta subunit (PubMed:25814576, PubMed:29420470, PubMed:33734450, PubMed:36071160). Subunit of dynactin, a multiprotein complex part of a tripartite complex with dynein and a adapter, such as BICDL1, BICD2 or HOOK3 (PubMed:33734450, PubMed:36071160). The dynactin complex is built around ACTR1A/ACTB filament and consists of an actin-related filament composed of a shoulder domain, a pointed end and a barbed end. Its length is defined by its flexible shoulder domain. The soulder is composed of 2 DCTN1 subunits, 4 DCTN2 and 2 DCTN3. The 4 DCNT2 (via N-terminus) bind the ACTR1A filament and act as molecular rulers to determine the length. The pointed end is important for binding dynein-dynactin cargo adapters. Consists of 4 subunits: ACTR10, DCNT4, DCTN5 and DCTN6 (PubMed:33734450). The barbed end is composed of a CAPZA1:CAPZB heterodimers, which binds ACTR1A/ACTB filament and dynactin and stabilizes dynactin (PubMed:33734450, PubMed:36071160). Component of the WASH complex, composed of F-actin-capping protein subunit alpha (CAPZA1, CAPZA2 or CAPZA3), F-actin-capping protein subunit beta (CAPZB), WASH (WASHC1, WASH2P, WASH3P, WASH4P, WASH5P or WASH6P), WASHC2 (WASHC2A or WASHC2C), WASHC3, WASHC4 and WASHC5. Interacts with S100B. Interacts with SH3BP1; recruits CAPZA1 to forming cell junctions. Interacts with CD2AP. Directly interacts with CRACD; this interaction decreases binding to actin (By similarity).</text>
</comment>
<comment type="subcellular location">
    <subcellularLocation>
        <location evidence="8">Cytoplasm</location>
        <location evidence="8">Cytoskeleton</location>
    </subcellularLocation>
</comment>
<comment type="similarity">
    <text evidence="7">Belongs to the F-actin-capping protein alpha subunit family.</text>
</comment>
<organism evidence="10">
    <name type="scientific">Sus scrofa</name>
    <name type="common">Pig</name>
    <dbReference type="NCBI Taxonomy" id="9823"/>
    <lineage>
        <taxon>Eukaryota</taxon>
        <taxon>Metazoa</taxon>
        <taxon>Chordata</taxon>
        <taxon>Craniata</taxon>
        <taxon>Vertebrata</taxon>
        <taxon>Euteleostomi</taxon>
        <taxon>Mammalia</taxon>
        <taxon>Eutheria</taxon>
        <taxon>Laurasiatheria</taxon>
        <taxon>Artiodactyla</taxon>
        <taxon>Suina</taxon>
        <taxon>Suidae</taxon>
        <taxon>Sus</taxon>
    </lineage>
</organism>
<evidence type="ECO:0000250" key="1"/>
<evidence type="ECO:0000250" key="2">
    <source>
        <dbReference type="UniProtKB" id="P52907"/>
    </source>
</evidence>
<evidence type="ECO:0000269" key="3">
    <source>
    </source>
</evidence>
<evidence type="ECO:0000269" key="4">
    <source>
    </source>
</evidence>
<evidence type="ECO:0000269" key="5">
    <source>
    </source>
</evidence>
<evidence type="ECO:0000269" key="6">
    <source>
    </source>
</evidence>
<evidence type="ECO:0000305" key="7"/>
<evidence type="ECO:0000305" key="8">
    <source>
    </source>
</evidence>
<evidence type="ECO:0000312" key="9">
    <source>
        <dbReference type="EMBL" id="ABQ96222.1"/>
    </source>
</evidence>
<evidence type="ECO:0000312" key="10">
    <source>
        <dbReference type="EMBL" id="CAL69435.1"/>
    </source>
</evidence>
<evidence type="ECO:0000312" key="11">
    <source>
        <dbReference type="EMBL" id="HDA51549.1"/>
    </source>
</evidence>
<evidence type="ECO:0000312" key="12">
    <source>
        <dbReference type="EMBL" id="JAA74132.1"/>
    </source>
</evidence>
<evidence type="ECO:0007744" key="13">
    <source>
        <dbReference type="PDB" id="5ADX"/>
    </source>
</evidence>
<evidence type="ECO:0007744" key="14">
    <source>
        <dbReference type="PDB" id="5AFU"/>
    </source>
</evidence>
<evidence type="ECO:0007744" key="15">
    <source>
        <dbReference type="PDB" id="6F1T"/>
    </source>
</evidence>
<evidence type="ECO:0007744" key="16">
    <source>
        <dbReference type="PDB" id="6F1U"/>
    </source>
</evidence>
<evidence type="ECO:0007744" key="17">
    <source>
        <dbReference type="PDB" id="6ZNL"/>
    </source>
</evidence>
<evidence type="ECO:0007744" key="18">
    <source>
        <dbReference type="PDB" id="7Z8F"/>
    </source>
</evidence>
<evidence type="ECO:0007744" key="19">
    <source>
        <dbReference type="PDB" id="7Z8M"/>
    </source>
</evidence>
<evidence type="ECO:0007829" key="20">
    <source>
        <dbReference type="PDB" id="6F1U"/>
    </source>
</evidence>
<sequence>MADFEDRVSDEEKVRIAAKFITHAPPGEFNEVFNDVRLLLNNDNLLREGAAHAFAQYNMDQFTPVKIEGYEDQVLITEHGDLGNSRFLDPRNKISFKFDHLRKEASDPQPEEVDGSLKSWRESCDSALRAYVKDHYSNGFCTVYAKNIDGQQTIIACIESHQFQPKNFWNGRWRSEWKFTITPPTAQVVGVLKIQVHYYEDGNVQLVSHKDVQDSVTVSNEAQTAKEFIKIIEHAENEYQTAISENYQTMSDTTFKALRRQLPVTRTKIDWNKILSYKIGKEMQNA</sequence>
<accession>A0PFK5</accession>
<accession>F6Q4Y6</accession>
<protein>
    <recommendedName>
        <fullName evidence="7">F-actin-capping protein subunit alpha-1</fullName>
    </recommendedName>
</protein>
<dbReference type="EMBL" id="EF202988">
    <property type="protein sequence ID" value="ABQ96222.1"/>
    <property type="molecule type" value="mRNA"/>
</dbReference>
<dbReference type="EMBL" id="AM410994">
    <property type="protein sequence ID" value="CAL69435.1"/>
    <property type="molecule type" value="mRNA"/>
</dbReference>
<dbReference type="EMBL" id="DQIR01096073">
    <property type="protein sequence ID" value="HDA51549.1"/>
    <property type="molecule type" value="Transcribed_RNA"/>
</dbReference>
<dbReference type="EMBL" id="GACC01000452">
    <property type="protein sequence ID" value="JAA74132.1"/>
    <property type="molecule type" value="mRNA"/>
</dbReference>
<dbReference type="RefSeq" id="NP_001090923.1">
    <property type="nucleotide sequence ID" value="NM_001097454.1"/>
</dbReference>
<dbReference type="PDB" id="5ADX">
    <property type="method" value="EM"/>
    <property type="resolution" value="4.00 A"/>
    <property type="chains" value="K=7-281"/>
</dbReference>
<dbReference type="PDB" id="5AFU">
    <property type="method" value="EM"/>
    <property type="resolution" value="3.50 A"/>
    <property type="chains" value="K=7-281"/>
</dbReference>
<dbReference type="PDB" id="5NW4">
    <property type="method" value="EM"/>
    <property type="resolution" value="8.70 A"/>
    <property type="chains" value="Y=1-286"/>
</dbReference>
<dbReference type="PDB" id="6F1T">
    <property type="method" value="EM"/>
    <property type="resolution" value="3.50 A"/>
    <property type="chains" value="K=1-286"/>
</dbReference>
<dbReference type="PDB" id="6F1U">
    <property type="method" value="EM"/>
    <property type="resolution" value="3.40 A"/>
    <property type="chains" value="K=1-286"/>
</dbReference>
<dbReference type="PDB" id="6F38">
    <property type="method" value="EM"/>
    <property type="resolution" value="6.70 A"/>
    <property type="chains" value="K=1-286"/>
</dbReference>
<dbReference type="PDB" id="6F3A">
    <property type="method" value="EM"/>
    <property type="resolution" value="8.20 A"/>
    <property type="chains" value="K=1-286"/>
</dbReference>
<dbReference type="PDB" id="6ZNL">
    <property type="method" value="EM"/>
    <property type="resolution" value="3.80 A"/>
    <property type="chains" value="K=1-286"/>
</dbReference>
<dbReference type="PDB" id="7Z8F">
    <property type="method" value="EM"/>
    <property type="resolution" value="20.00 A"/>
    <property type="chains" value="H=1-286"/>
</dbReference>
<dbReference type="PDB" id="7Z8M">
    <property type="method" value="EM"/>
    <property type="resolution" value="3.37 A"/>
    <property type="chains" value="H=1-286"/>
</dbReference>
<dbReference type="PDB" id="8PTK">
    <property type="method" value="EM"/>
    <property type="resolution" value="10.00 A"/>
    <property type="chains" value="K=1-286"/>
</dbReference>
<dbReference type="PDBsum" id="5ADX"/>
<dbReference type="PDBsum" id="5AFU"/>
<dbReference type="PDBsum" id="5NW4"/>
<dbReference type="PDBsum" id="6F1T"/>
<dbReference type="PDBsum" id="6F1U"/>
<dbReference type="PDBsum" id="6F38"/>
<dbReference type="PDBsum" id="6F3A"/>
<dbReference type="PDBsum" id="6ZNL"/>
<dbReference type="PDBsum" id="7Z8F"/>
<dbReference type="PDBsum" id="7Z8M"/>
<dbReference type="PDBsum" id="8PTK"/>
<dbReference type="EMDB" id="EMD-11313"/>
<dbReference type="EMDB" id="EMD-14549"/>
<dbReference type="EMDB" id="EMD-14552"/>
<dbReference type="EMDB" id="EMD-17873"/>
<dbReference type="EMDB" id="EMD-3706"/>
<dbReference type="EMDB" id="EMD-4168"/>
<dbReference type="EMDB" id="EMD-4169"/>
<dbReference type="EMDB" id="EMD-4177"/>
<dbReference type="SMR" id="A0PFK5"/>
<dbReference type="FunCoup" id="A0PFK5">
    <property type="interactions" value="101"/>
</dbReference>
<dbReference type="Ensembl" id="ENSSSCT00065063461.1">
    <property type="protein sequence ID" value="ENSSSCP00065027494.1"/>
    <property type="gene ID" value="ENSSSCG00065046383.1"/>
</dbReference>
<dbReference type="Ensembl" id="ENSSSCT00070013725.1">
    <property type="protein sequence ID" value="ENSSSCP00070011315.1"/>
    <property type="gene ID" value="ENSSSCG00070007119.1"/>
</dbReference>
<dbReference type="Ensembl" id="ENSSSCT00090026534">
    <property type="protein sequence ID" value="ENSSSCP00090016304"/>
    <property type="gene ID" value="ENSSSCG00090015127"/>
</dbReference>
<dbReference type="Ensembl" id="ENSSSCT00115038066">
    <property type="protein sequence ID" value="ENSSSCP00115035950"/>
    <property type="gene ID" value="ENSSSCG00115021474"/>
</dbReference>
<dbReference type="Ensembl" id="ENSSSCT00130057175">
    <property type="protein sequence ID" value="ENSSSCP00130040959"/>
    <property type="gene ID" value="ENSSSCG00130029109"/>
</dbReference>
<dbReference type="GeneID" id="100037957"/>
<dbReference type="KEGG" id="ssc:100037957"/>
<dbReference type="CTD" id="829"/>
<dbReference type="eggNOG" id="KOG0836">
    <property type="taxonomic scope" value="Eukaryota"/>
</dbReference>
<dbReference type="OMA" id="YNLRNFW"/>
<dbReference type="OrthoDB" id="340550at2759"/>
<dbReference type="ChiTaRS" id="GGTA1P">
    <property type="organism name" value="pig"/>
</dbReference>
<dbReference type="EvolutionaryTrace" id="A0PFK5"/>
<dbReference type="Proteomes" id="UP000008227">
    <property type="component" value="Unplaced"/>
</dbReference>
<dbReference type="Proteomes" id="UP000314985">
    <property type="component" value="Chromosome 4"/>
</dbReference>
<dbReference type="Proteomes" id="UP000694570">
    <property type="component" value="Unplaced"/>
</dbReference>
<dbReference type="Proteomes" id="UP000694571">
    <property type="component" value="Unplaced"/>
</dbReference>
<dbReference type="Proteomes" id="UP000694720">
    <property type="component" value="Unplaced"/>
</dbReference>
<dbReference type="Proteomes" id="UP000694722">
    <property type="component" value="Unplaced"/>
</dbReference>
<dbReference type="Proteomes" id="UP000694723">
    <property type="component" value="Unplaced"/>
</dbReference>
<dbReference type="Proteomes" id="UP000694724">
    <property type="component" value="Unplaced"/>
</dbReference>
<dbReference type="Proteomes" id="UP000694725">
    <property type="component" value="Unplaced"/>
</dbReference>
<dbReference type="Proteomes" id="UP000694726">
    <property type="component" value="Unplaced"/>
</dbReference>
<dbReference type="Proteomes" id="UP000694727">
    <property type="component" value="Unplaced"/>
</dbReference>
<dbReference type="Proteomes" id="UP000694728">
    <property type="component" value="Unplaced"/>
</dbReference>
<dbReference type="GO" id="GO:0030863">
    <property type="term" value="C:cortical cytoskeleton"/>
    <property type="evidence" value="ECO:0000318"/>
    <property type="project" value="GO_Central"/>
</dbReference>
<dbReference type="GO" id="GO:0008290">
    <property type="term" value="C:F-actin capping protein complex"/>
    <property type="evidence" value="ECO:0000318"/>
    <property type="project" value="GO_Central"/>
</dbReference>
<dbReference type="GO" id="GO:0051015">
    <property type="term" value="F:actin filament binding"/>
    <property type="evidence" value="ECO:0000318"/>
    <property type="project" value="GO_Central"/>
</dbReference>
<dbReference type="GO" id="GO:0030036">
    <property type="term" value="P:actin cytoskeleton organization"/>
    <property type="evidence" value="ECO:0000318"/>
    <property type="project" value="GO_Central"/>
</dbReference>
<dbReference type="GO" id="GO:0051016">
    <property type="term" value="P:barbed-end actin filament capping"/>
    <property type="evidence" value="ECO:0000318"/>
    <property type="project" value="GO_Central"/>
</dbReference>
<dbReference type="FunFam" id="3.30.1140.60:FF:000001">
    <property type="entry name" value="F-actin-capping protein subunit alpha"/>
    <property type="match status" value="1"/>
</dbReference>
<dbReference type="FunFam" id="3.90.1150.210:FF:000002">
    <property type="entry name" value="F-actin-capping protein subunit alpha"/>
    <property type="match status" value="1"/>
</dbReference>
<dbReference type="Gene3D" id="3.30.1140.60">
    <property type="entry name" value="F-actin capping protein, alpha subunit"/>
    <property type="match status" value="1"/>
</dbReference>
<dbReference type="Gene3D" id="3.90.1150.210">
    <property type="entry name" value="F-actin capping protein, beta subunit"/>
    <property type="match status" value="1"/>
</dbReference>
<dbReference type="InterPro" id="IPR002189">
    <property type="entry name" value="CapZ_alpha"/>
</dbReference>
<dbReference type="InterPro" id="IPR037282">
    <property type="entry name" value="CapZ_alpha/beta"/>
</dbReference>
<dbReference type="InterPro" id="IPR042276">
    <property type="entry name" value="CapZ_alpha/beta_2"/>
</dbReference>
<dbReference type="InterPro" id="IPR042489">
    <property type="entry name" value="CapZ_alpha_1"/>
</dbReference>
<dbReference type="InterPro" id="IPR017865">
    <property type="entry name" value="F-actin_cap_asu_CS"/>
</dbReference>
<dbReference type="PANTHER" id="PTHR10653">
    <property type="entry name" value="F-ACTIN-CAPPING PROTEIN SUBUNIT ALPHA"/>
    <property type="match status" value="1"/>
</dbReference>
<dbReference type="PANTHER" id="PTHR10653:SF5">
    <property type="entry name" value="F-ACTIN-CAPPING PROTEIN SUBUNIT ALPHA-1"/>
    <property type="match status" value="1"/>
</dbReference>
<dbReference type="Pfam" id="PF01267">
    <property type="entry name" value="F-actin_cap_A"/>
    <property type="match status" value="1"/>
</dbReference>
<dbReference type="PRINTS" id="PR00191">
    <property type="entry name" value="FACTINCAPA"/>
</dbReference>
<dbReference type="SUPFAM" id="SSF90096">
    <property type="entry name" value="Subunits of heterodimeric actin filament capping protein Capz"/>
    <property type="match status" value="1"/>
</dbReference>
<dbReference type="PROSITE" id="PS00748">
    <property type="entry name" value="F_ACTIN_CAPPING_A_1"/>
    <property type="match status" value="1"/>
</dbReference>
<dbReference type="PROSITE" id="PS00749">
    <property type="entry name" value="F_ACTIN_CAPPING_A_2"/>
    <property type="match status" value="1"/>
</dbReference>
<gene>
    <name type="primary">CAPZA1</name>
    <name evidence="9" type="synonym">Capza</name>
    <name evidence="10" type="synonym">CP alpha1</name>
</gene>
<proteinExistence type="evidence at protein level"/>